<reference key="1">
    <citation type="journal article" date="1978" name="Nucleic Acids Res.">
        <title>Nucleotide sequence of bacteriophage fd DNA.</title>
        <authorList>
            <person name="Beck E."/>
            <person name="Sommer R."/>
            <person name="Auerswald E.A."/>
            <person name="Kurz C."/>
            <person name="Zink B."/>
            <person name="Osterburg G."/>
            <person name="Schaller H."/>
            <person name="Sugimoto K."/>
            <person name="Sugisaki H."/>
            <person name="Okamoto T."/>
            <person name="Takanami M."/>
        </authorList>
    </citation>
    <scope>NUCLEOTIDE SEQUENCE [GENOMIC DNA]</scope>
    <source>
        <strain>478 / Heidelberg</strain>
    </source>
</reference>
<organism>
    <name type="scientific">Enterobacteria phage fd</name>
    <name type="common">Bacteriophage fd</name>
    <dbReference type="NCBI Taxonomy" id="2847073"/>
    <lineage>
        <taxon>Viruses</taxon>
        <taxon>Monodnaviria</taxon>
        <taxon>Loebvirae</taxon>
        <taxon>Hofneiviricota</taxon>
        <taxon>Faserviricetes</taxon>
        <taxon>Tubulavirales</taxon>
        <taxon>Inoviridae</taxon>
        <taxon>Inovirus</taxon>
        <taxon>Enterobacteria phage M13</taxon>
    </lineage>
</organism>
<organismHost>
    <name type="scientific">Escherichia coli</name>
    <dbReference type="NCBI Taxonomy" id="562"/>
</organismHost>
<keyword id="KW-0024">Alternative initiation</keyword>
<keyword id="KW-0235">DNA replication</keyword>
<keyword id="KW-0238">DNA-binding</keyword>
<keyword id="KW-0255">Endonuclease</keyword>
<keyword id="KW-0291">Formylation</keyword>
<keyword id="KW-0378">Hydrolase</keyword>
<keyword id="KW-0436">Ligase</keyword>
<keyword id="KW-0540">Nuclease</keyword>
<sequence length="410" mass="46237">MIDMLVLRLPFIDSLVCSRLSGNDLIAFVDLSKIATLSGMNLSARTVEYHIDGDLTVSGLSHPFESLPTHYSGIAFKIYEGSKNFYPCVEIKASPAKVLQGHNVFGTTDLALCSEALLLNFANSLPCLYDLLDVNATTISRIDATFSARAPNENIAKQVIDHLRNVSNGQTKSTRSQNWESTVTWNETSRHRTLVAYLKHVELQHQIQQLSSKPSAKMTSYQKEQLKVLSNPDLLEFASGLVRFEARIETRYLKSFGLPLNLFDAIRFASDYNRQGKDLIFDLWSFSFSELFKAFEGDSMNIYDDSAVLDAIQSKHFTITPSGKTSFAKASRYFGFYRRLVNEGYDSVALTMPRNSFWRYVSALVECGIPKSQLMNLSTCNNVVPLVRFINVDFSSQRPDWYNEPVLKIA</sequence>
<comment type="function">
    <text evidence="1">Isoform G2P plays an essential role in viral DNA replication. Binds the origin of replication and cleaves the dsDNA replicative form I (RFI) and becomes covalently bound to it via phosphotyrosine bond, generating the dsDNA replicative form II (RFII). In turn, viral DNA replication initiates at the 3'-OH of the cleavage site. After one round of rolling circle synthesis, protein G2P is linked to the newly synthesized ssDNA and joins the ends of the displaced strand to generate a circular single-stranded molecule ready to be packed into a virion.</text>
</comment>
<comment type="function">
    <text evidence="1">Isoform G10P protein binds to double-stranded DNA and prevents hydrolysis by nucleases. Additionally, G10P is an inhibitor of DNA replication and may have a role in the transition from semiconservative replicative form DNA replication to single-stranded DNA synthesis in the life cycle.</text>
</comment>
<comment type="catalytic activity">
    <reaction>
        <text>ATP + (deoxyribonucleotide)n-3'-hydroxyl + 5'-phospho-(deoxyribonucleotide)m = (deoxyribonucleotide)n+m + AMP + diphosphate.</text>
        <dbReference type="EC" id="6.5.1.1"/>
    </reaction>
</comment>
<comment type="alternative products">
    <event type="alternative initiation"/>
    <isoform>
        <id>P69545-1</id>
        <name>G2P</name>
        <name>Gene 2 protein</name>
        <sequence type="displayed"/>
    </isoform>
    <isoform>
        <id>P69545-2</id>
        <name>G10P</name>
        <name>Gene 10 protein</name>
        <sequence type="described" ref="VSP_018669"/>
    </isoform>
</comment>
<comment type="similarity">
    <text evidence="3">Belongs to the inovirus G2P protein family.</text>
</comment>
<evidence type="ECO:0000250" key="1"/>
<evidence type="ECO:0000250" key="2">
    <source>
        <dbReference type="UniProtKB" id="P69546"/>
    </source>
</evidence>
<evidence type="ECO:0000305" key="3"/>
<dbReference type="EC" id="3.1.21.-"/>
<dbReference type="EC" id="6.5.1.1"/>
<dbReference type="EMBL" id="J02451">
    <property type="protein sequence ID" value="AAA32303.1"/>
    <property type="molecule type" value="Genomic_DNA"/>
</dbReference>
<dbReference type="EMBL" id="J02451">
    <property type="protein sequence ID" value="AAA32304.1"/>
    <property type="molecule type" value="Genomic_DNA"/>
</dbReference>
<dbReference type="PIR" id="A04264">
    <property type="entry name" value="Z2BPFD"/>
</dbReference>
<dbReference type="KEGG" id="vg:22474999"/>
<dbReference type="KEGG" id="vg:22475008"/>
<dbReference type="Proteomes" id="UP000001836">
    <property type="component" value="Genome"/>
</dbReference>
<dbReference type="GO" id="GO:0003677">
    <property type="term" value="F:DNA binding"/>
    <property type="evidence" value="ECO:0007669"/>
    <property type="project" value="UniProtKB-KW"/>
</dbReference>
<dbReference type="GO" id="GO:0003910">
    <property type="term" value="F:DNA ligase (ATP) activity"/>
    <property type="evidence" value="ECO:0007669"/>
    <property type="project" value="UniProtKB-EC"/>
</dbReference>
<dbReference type="GO" id="GO:0004519">
    <property type="term" value="F:endonuclease activity"/>
    <property type="evidence" value="ECO:0007669"/>
    <property type="project" value="UniProtKB-KW"/>
</dbReference>
<dbReference type="GO" id="GO:0006260">
    <property type="term" value="P:DNA replication"/>
    <property type="evidence" value="ECO:0007669"/>
    <property type="project" value="UniProtKB-KW"/>
</dbReference>
<dbReference type="GO" id="GO:0039684">
    <property type="term" value="P:rolling circle single-stranded viral DNA replication"/>
    <property type="evidence" value="ECO:0000314"/>
    <property type="project" value="UniProtKB"/>
</dbReference>
<dbReference type="InterPro" id="IPR006516">
    <property type="entry name" value="G2P"/>
</dbReference>
<dbReference type="InterPro" id="IPR022688">
    <property type="entry name" value="G2P_C"/>
</dbReference>
<dbReference type="InterPro" id="IPR022686">
    <property type="entry name" value="G2P_N"/>
</dbReference>
<dbReference type="NCBIfam" id="TIGR01629">
    <property type="entry name" value="rep_II_X"/>
    <property type="match status" value="1"/>
</dbReference>
<dbReference type="Pfam" id="PF05155">
    <property type="entry name" value="G2P_X_C"/>
    <property type="match status" value="1"/>
</dbReference>
<dbReference type="Pfam" id="PF05144">
    <property type="entry name" value="Phage_CRI"/>
    <property type="match status" value="1"/>
</dbReference>
<gene>
    <name type="primary">II</name>
</gene>
<feature type="chain" id="PRO_0000003303" description="Replication-associated protein G2P">
    <location>
        <begin position="1"/>
        <end position="410"/>
    </location>
</feature>
<feature type="splice variant" id="VSP_018669" description="In isoform G10P." evidence="3">
    <location>
        <begin position="1"/>
        <end position="299"/>
    </location>
</feature>
<feature type="modified residue" description="N-formylmethionine" evidence="2">
    <location sequence="P69545-2">
        <position position="1"/>
    </location>
</feature>
<protein>
    <recommendedName>
        <fullName>Replication-associated protein G2P</fullName>
        <shortName>Rep</shortName>
        <ecNumber>3.1.21.-</ecNumber>
        <ecNumber>6.5.1.1</ecNumber>
    </recommendedName>
    <alternativeName>
        <fullName>G2P</fullName>
    </alternativeName>
    <alternativeName>
        <fullName>Gene 2 protein</fullName>
    </alternativeName>
</protein>
<accession>P69545</accession>
<accession>P03659</accession>
<name>REP_BPFD</name>
<proteinExistence type="inferred from homology"/>